<gene>
    <name type="primary">CAPZA2</name>
</gene>
<dbReference type="EMBL" id="DP000019">
    <property type="protein sequence ID" value="ABB89790.1"/>
    <property type="molecule type" value="Genomic_DNA"/>
</dbReference>
<dbReference type="SMR" id="Q2QLB9"/>
<dbReference type="GO" id="GO:0030863">
    <property type="term" value="C:cortical cytoskeleton"/>
    <property type="evidence" value="ECO:0007669"/>
    <property type="project" value="TreeGrafter"/>
</dbReference>
<dbReference type="GO" id="GO:0008290">
    <property type="term" value="C:F-actin capping protein complex"/>
    <property type="evidence" value="ECO:0007669"/>
    <property type="project" value="InterPro"/>
</dbReference>
<dbReference type="GO" id="GO:0051015">
    <property type="term" value="F:actin filament binding"/>
    <property type="evidence" value="ECO:0007669"/>
    <property type="project" value="TreeGrafter"/>
</dbReference>
<dbReference type="GO" id="GO:0030036">
    <property type="term" value="P:actin cytoskeleton organization"/>
    <property type="evidence" value="ECO:0007669"/>
    <property type="project" value="TreeGrafter"/>
</dbReference>
<dbReference type="GO" id="GO:0051016">
    <property type="term" value="P:barbed-end actin filament capping"/>
    <property type="evidence" value="ECO:0007669"/>
    <property type="project" value="InterPro"/>
</dbReference>
<dbReference type="FunFam" id="3.30.1140.60:FF:000001">
    <property type="entry name" value="F-actin-capping protein subunit alpha"/>
    <property type="match status" value="1"/>
</dbReference>
<dbReference type="FunFam" id="3.90.1150.210:FF:000002">
    <property type="entry name" value="F-actin-capping protein subunit alpha"/>
    <property type="match status" value="1"/>
</dbReference>
<dbReference type="Gene3D" id="3.30.1140.60">
    <property type="entry name" value="F-actin capping protein, alpha subunit"/>
    <property type="match status" value="1"/>
</dbReference>
<dbReference type="Gene3D" id="3.90.1150.210">
    <property type="entry name" value="F-actin capping protein, beta subunit"/>
    <property type="match status" value="1"/>
</dbReference>
<dbReference type="InterPro" id="IPR002189">
    <property type="entry name" value="CapZ_alpha"/>
</dbReference>
<dbReference type="InterPro" id="IPR037282">
    <property type="entry name" value="CapZ_alpha/beta"/>
</dbReference>
<dbReference type="InterPro" id="IPR042276">
    <property type="entry name" value="CapZ_alpha/beta_2"/>
</dbReference>
<dbReference type="InterPro" id="IPR042489">
    <property type="entry name" value="CapZ_alpha_1"/>
</dbReference>
<dbReference type="InterPro" id="IPR017865">
    <property type="entry name" value="F-actin_cap_asu_CS"/>
</dbReference>
<dbReference type="PANTHER" id="PTHR10653">
    <property type="entry name" value="F-ACTIN-CAPPING PROTEIN SUBUNIT ALPHA"/>
    <property type="match status" value="1"/>
</dbReference>
<dbReference type="PANTHER" id="PTHR10653:SF2">
    <property type="entry name" value="F-ACTIN-CAPPING PROTEIN SUBUNIT ALPHA-2"/>
    <property type="match status" value="1"/>
</dbReference>
<dbReference type="Pfam" id="PF01267">
    <property type="entry name" value="F-actin_cap_A"/>
    <property type="match status" value="1"/>
</dbReference>
<dbReference type="PRINTS" id="PR00191">
    <property type="entry name" value="FACTINCAPA"/>
</dbReference>
<dbReference type="SUPFAM" id="SSF90096">
    <property type="entry name" value="Subunits of heterodimeric actin filament capping protein Capz"/>
    <property type="match status" value="1"/>
</dbReference>
<dbReference type="PROSITE" id="PS00748">
    <property type="entry name" value="F_ACTIN_CAPPING_A_1"/>
    <property type="match status" value="1"/>
</dbReference>
<dbReference type="PROSITE" id="PS00749">
    <property type="entry name" value="F_ACTIN_CAPPING_A_2"/>
    <property type="match status" value="1"/>
</dbReference>
<evidence type="ECO:0000250" key="1"/>
<evidence type="ECO:0000250" key="2">
    <source>
        <dbReference type="UniProtKB" id="P47755"/>
    </source>
</evidence>
<evidence type="ECO:0000305" key="3"/>
<feature type="initiator methionine" description="Removed" evidence="2">
    <location>
        <position position="1"/>
    </location>
</feature>
<feature type="chain" id="PRO_0000226311" description="F-actin-capping protein subunit alpha-2">
    <location>
        <begin position="2"/>
        <end position="286"/>
    </location>
</feature>
<feature type="modified residue" description="N-acetylalanine" evidence="2">
    <location>
        <position position="2"/>
    </location>
</feature>
<feature type="modified residue" description="Phosphoserine" evidence="2">
    <location>
        <position position="9"/>
    </location>
</feature>
<proteinExistence type="inferred from homology"/>
<sequence>MADLEEQLSDEEKVRIAAKFIIHAPPGEFNEVFNDVRLLLNNDNLLREGAAHAFAQYNLDQFTPVKIEGYEDQVLITEHGDLGNGKFLDPKNRICFKFDHLRKEATDPRSCEVENAIESWRTSVETALRAYVKEHYPNGVCTVYGKKIDGQQTIIACIESHQFQAKNFWNGRWRSEWKFTITPSTTQVVGILKIQVHYYEDGNVQLVSHKDIQDSLTVSNEVQTAKEFIKIVEAAENEYQTAISENYQTMSDTTFKALRRQLPVTRTKIDWNKILSYKIGKEMQNA</sequence>
<keyword id="KW-0007">Acetylation</keyword>
<keyword id="KW-0117">Actin capping</keyword>
<keyword id="KW-0009">Actin-binding</keyword>
<keyword id="KW-0597">Phosphoprotein</keyword>
<comment type="function">
    <text evidence="1">F-actin-capping proteins bind in a Ca(2+)-independent manner to the fast growing ends of actin filaments (barbed end) thereby blocking the exchange of subunits at these ends. Unlike other capping proteins (such as gelsolin and severin), these proteins do not sever actin filaments (By similarity).</text>
</comment>
<comment type="subunit">
    <text evidence="1">Component of the F-actin capping complex, composed of a heterodimer of an alpha and a beta subunit. Component of the WASH complex, composed of F-actin-capping protein subunit alpha (CAPZA1, CAPZA2 or CAPZA3), F-actin-capping protein subunit beta (CAPZB), WASHC1, WASHC2, WASHC3, WASHC4 and WASHC5. Interacts with RCSD1/CAPZIP (By similarity).</text>
</comment>
<comment type="similarity">
    <text evidence="3">Belongs to the F-actin-capping protein alpha subunit family.</text>
</comment>
<name>CAZA2_PLEMO</name>
<accession>Q2QLB9</accession>
<reference key="1">
    <citation type="submission" date="2005-11" db="EMBL/GenBank/DDBJ databases">
        <title>NISC comparative sequencing initiative.</title>
        <authorList>
            <person name="Antonellis A."/>
            <person name="Ayele K."/>
            <person name="Benjamin B."/>
            <person name="Blakesley R.W."/>
            <person name="Boakye A."/>
            <person name="Bouffard G.G."/>
            <person name="Brinkley C."/>
            <person name="Brooks S."/>
            <person name="Chu G."/>
            <person name="Coleman H."/>
            <person name="Engle J."/>
            <person name="Gestole M."/>
            <person name="Greene A."/>
            <person name="Guan X."/>
            <person name="Gupta J."/>
            <person name="Haghighi P."/>
            <person name="Han J."/>
            <person name="Hansen N."/>
            <person name="Ho S.-L."/>
            <person name="Hu P."/>
            <person name="Hunter G."/>
            <person name="Hurle B."/>
            <person name="Idol J.R."/>
            <person name="Kwong P."/>
            <person name="Laric P."/>
            <person name="Larson S."/>
            <person name="Lee-Lin S.-Q."/>
            <person name="Legaspi R."/>
            <person name="Madden M."/>
            <person name="Maduro Q.L."/>
            <person name="Maduro V.B."/>
            <person name="Margulies E.H."/>
            <person name="Masiello C."/>
            <person name="Maskeri B."/>
            <person name="McDowell J."/>
            <person name="Mojidi H.A."/>
            <person name="Mullikin J.C."/>
            <person name="Oestreicher J.S."/>
            <person name="Park M."/>
            <person name="Portnoy M.E."/>
            <person name="Prasad A."/>
            <person name="Puri O."/>
            <person name="Reddix-Dugue N."/>
            <person name="Schandler K."/>
            <person name="Schueler M.G."/>
            <person name="Sison C."/>
            <person name="Stantripop S."/>
            <person name="Stephen E."/>
            <person name="Taye A."/>
            <person name="Thomas J.W."/>
            <person name="Thomas P.J."/>
            <person name="Tsipouri V."/>
            <person name="Ung L."/>
            <person name="Vogt J.L."/>
            <person name="Wetherby K.D."/>
            <person name="Young A."/>
            <person name="Green E.D."/>
        </authorList>
    </citation>
    <scope>NUCLEOTIDE SEQUENCE [LARGE SCALE GENOMIC DNA]</scope>
</reference>
<organism>
    <name type="scientific">Plecturocebus moloch</name>
    <name type="common">Dusky titi monkey</name>
    <name type="synonym">Callicebus moloch</name>
    <dbReference type="NCBI Taxonomy" id="9523"/>
    <lineage>
        <taxon>Eukaryota</taxon>
        <taxon>Metazoa</taxon>
        <taxon>Chordata</taxon>
        <taxon>Craniata</taxon>
        <taxon>Vertebrata</taxon>
        <taxon>Euteleostomi</taxon>
        <taxon>Mammalia</taxon>
        <taxon>Eutheria</taxon>
        <taxon>Euarchontoglires</taxon>
        <taxon>Primates</taxon>
        <taxon>Haplorrhini</taxon>
        <taxon>Platyrrhini</taxon>
        <taxon>Pitheciidae</taxon>
        <taxon>Callicebinae</taxon>
        <taxon>Plecturocebus</taxon>
    </lineage>
</organism>
<protein>
    <recommendedName>
        <fullName>F-actin-capping protein subunit alpha-2</fullName>
    </recommendedName>
    <alternativeName>
        <fullName>CapZ alpha-2</fullName>
    </alternativeName>
</protein>